<organism>
    <name type="scientific">Francisella tularensis subsp. holarctica (strain FTNF002-00 / FTA)</name>
    <dbReference type="NCBI Taxonomy" id="458234"/>
    <lineage>
        <taxon>Bacteria</taxon>
        <taxon>Pseudomonadati</taxon>
        <taxon>Pseudomonadota</taxon>
        <taxon>Gammaproteobacteria</taxon>
        <taxon>Thiotrichales</taxon>
        <taxon>Francisellaceae</taxon>
        <taxon>Francisella</taxon>
    </lineage>
</organism>
<protein>
    <recommendedName>
        <fullName evidence="1">Glycerol-3-phosphate acyltransferase</fullName>
    </recommendedName>
    <alternativeName>
        <fullName evidence="1">Acyl-PO4 G3P acyltransferase</fullName>
    </alternativeName>
    <alternativeName>
        <fullName evidence="1">Acyl-phosphate--glycerol-3-phosphate acyltransferase</fullName>
    </alternativeName>
    <alternativeName>
        <fullName evidence="1">G3P acyltransferase</fullName>
        <shortName evidence="1">GPAT</shortName>
        <ecNumber evidence="1">2.3.1.275</ecNumber>
    </alternativeName>
    <alternativeName>
        <fullName evidence="1">Lysophosphatidic acid synthase</fullName>
        <shortName evidence="1">LPA synthase</shortName>
    </alternativeName>
</protein>
<feature type="chain" id="PRO_1000064177" description="Glycerol-3-phosphate acyltransferase">
    <location>
        <begin position="1"/>
        <end position="204"/>
    </location>
</feature>
<feature type="transmembrane region" description="Helical" evidence="1">
    <location>
        <begin position="8"/>
        <end position="28"/>
    </location>
</feature>
<feature type="transmembrane region" description="Helical" evidence="1">
    <location>
        <begin position="53"/>
        <end position="73"/>
    </location>
</feature>
<feature type="transmembrane region" description="Helical" evidence="1">
    <location>
        <begin position="81"/>
        <end position="101"/>
    </location>
</feature>
<feature type="transmembrane region" description="Helical" evidence="1">
    <location>
        <begin position="116"/>
        <end position="136"/>
    </location>
</feature>
<feature type="transmembrane region" description="Helical" evidence="1">
    <location>
        <begin position="155"/>
        <end position="175"/>
    </location>
</feature>
<evidence type="ECO:0000255" key="1">
    <source>
        <dbReference type="HAMAP-Rule" id="MF_01043"/>
    </source>
</evidence>
<gene>
    <name evidence="1" type="primary">plsY</name>
    <name type="ordered locus">FTA_0889</name>
</gene>
<keyword id="KW-0997">Cell inner membrane</keyword>
<keyword id="KW-1003">Cell membrane</keyword>
<keyword id="KW-0444">Lipid biosynthesis</keyword>
<keyword id="KW-0443">Lipid metabolism</keyword>
<keyword id="KW-0472">Membrane</keyword>
<keyword id="KW-0594">Phospholipid biosynthesis</keyword>
<keyword id="KW-1208">Phospholipid metabolism</keyword>
<keyword id="KW-0808">Transferase</keyword>
<keyword id="KW-0812">Transmembrane</keyword>
<keyword id="KW-1133">Transmembrane helix</keyword>
<comment type="function">
    <text evidence="1">Catalyzes the transfer of an acyl group from acyl-phosphate (acyl-PO(4)) to glycerol-3-phosphate (G3P) to form lysophosphatidic acid (LPA). This enzyme utilizes acyl-phosphate as fatty acyl donor, but not acyl-CoA or acyl-ACP.</text>
</comment>
<comment type="catalytic activity">
    <reaction evidence="1">
        <text>an acyl phosphate + sn-glycerol 3-phosphate = a 1-acyl-sn-glycero-3-phosphate + phosphate</text>
        <dbReference type="Rhea" id="RHEA:34075"/>
        <dbReference type="ChEBI" id="CHEBI:43474"/>
        <dbReference type="ChEBI" id="CHEBI:57597"/>
        <dbReference type="ChEBI" id="CHEBI:57970"/>
        <dbReference type="ChEBI" id="CHEBI:59918"/>
        <dbReference type="EC" id="2.3.1.275"/>
    </reaction>
</comment>
<comment type="pathway">
    <text evidence="1">Lipid metabolism; phospholipid metabolism.</text>
</comment>
<comment type="subunit">
    <text evidence="1">Probably interacts with PlsX.</text>
</comment>
<comment type="subcellular location">
    <subcellularLocation>
        <location evidence="1">Cell inner membrane</location>
        <topology evidence="1">Multi-pass membrane protein</topology>
    </subcellularLocation>
</comment>
<comment type="similarity">
    <text evidence="1">Belongs to the PlsY family.</text>
</comment>
<accession>A7NBL2</accession>
<sequence>MNFLNFSILIFAYLLGSINSAIIVCYIFRLPSPRSVGSGNPGTTNVLRIGGKVPAAITLIFDILKGLVPVVIAKVLTGNDFITACTALYAILGHIFPIFFGFKGGKGVATLIGTLFGFSWILGLIFVITWLCVAIITRYSSLSALVATVIASFSVIFTSDLQVAAPFLIIAIIILVKHKGNIQRLISGQESKIGDKAKAKNDSN</sequence>
<reference key="1">
    <citation type="journal article" date="2009" name="PLoS ONE">
        <title>Complete genome sequence of Francisella tularensis subspecies holarctica FTNF002-00.</title>
        <authorList>
            <person name="Barabote R.D."/>
            <person name="Xie G."/>
            <person name="Brettin T.S."/>
            <person name="Hinrichs S.H."/>
            <person name="Fey P.D."/>
            <person name="Jay J.J."/>
            <person name="Engle J.L."/>
            <person name="Godbole S.D."/>
            <person name="Noronha J.M."/>
            <person name="Scheuermann R.H."/>
            <person name="Zhou L.W."/>
            <person name="Lion C."/>
            <person name="Dempsey M.P."/>
        </authorList>
    </citation>
    <scope>NUCLEOTIDE SEQUENCE [LARGE SCALE GENOMIC DNA]</scope>
    <source>
        <strain>FTNF002-00 / FTA</strain>
    </source>
</reference>
<dbReference type="EC" id="2.3.1.275" evidence="1"/>
<dbReference type="EMBL" id="CP000803">
    <property type="protein sequence ID" value="ABU61365.1"/>
    <property type="molecule type" value="Genomic_DNA"/>
</dbReference>
<dbReference type="RefSeq" id="WP_003015429.1">
    <property type="nucleotide sequence ID" value="NC_009749.1"/>
</dbReference>
<dbReference type="SMR" id="A7NBL2"/>
<dbReference type="KEGG" id="fta:FTA_0889"/>
<dbReference type="HOGENOM" id="CLU_081254_0_2_6"/>
<dbReference type="UniPathway" id="UPA00085"/>
<dbReference type="GO" id="GO:0005886">
    <property type="term" value="C:plasma membrane"/>
    <property type="evidence" value="ECO:0007669"/>
    <property type="project" value="UniProtKB-SubCell"/>
</dbReference>
<dbReference type="GO" id="GO:0043772">
    <property type="term" value="F:acyl-phosphate glycerol-3-phosphate acyltransferase activity"/>
    <property type="evidence" value="ECO:0007669"/>
    <property type="project" value="UniProtKB-UniRule"/>
</dbReference>
<dbReference type="GO" id="GO:0008654">
    <property type="term" value="P:phospholipid biosynthetic process"/>
    <property type="evidence" value="ECO:0007669"/>
    <property type="project" value="UniProtKB-UniRule"/>
</dbReference>
<dbReference type="HAMAP" id="MF_01043">
    <property type="entry name" value="PlsY"/>
    <property type="match status" value="1"/>
</dbReference>
<dbReference type="InterPro" id="IPR003811">
    <property type="entry name" value="G3P_acylTferase_PlsY"/>
</dbReference>
<dbReference type="NCBIfam" id="TIGR00023">
    <property type="entry name" value="glycerol-3-phosphate 1-O-acyltransferase PlsY"/>
    <property type="match status" value="1"/>
</dbReference>
<dbReference type="PANTHER" id="PTHR30309:SF0">
    <property type="entry name" value="GLYCEROL-3-PHOSPHATE ACYLTRANSFERASE-RELATED"/>
    <property type="match status" value="1"/>
</dbReference>
<dbReference type="PANTHER" id="PTHR30309">
    <property type="entry name" value="INNER MEMBRANE PROTEIN YGIH"/>
    <property type="match status" value="1"/>
</dbReference>
<dbReference type="Pfam" id="PF02660">
    <property type="entry name" value="G3P_acyltransf"/>
    <property type="match status" value="1"/>
</dbReference>
<dbReference type="SMART" id="SM01207">
    <property type="entry name" value="G3P_acyltransf"/>
    <property type="match status" value="1"/>
</dbReference>
<proteinExistence type="inferred from homology"/>
<name>PLSY_FRATF</name>